<evidence type="ECO:0000255" key="1">
    <source>
        <dbReference type="HAMAP-Rule" id="MF_01624"/>
    </source>
</evidence>
<keyword id="KW-0059">Arsenical resistance</keyword>
<keyword id="KW-0963">Cytoplasm</keyword>
<keyword id="KW-1015">Disulfide bond</keyword>
<keyword id="KW-0560">Oxidoreductase</keyword>
<keyword id="KW-0676">Redox-active center</keyword>
<keyword id="KW-1185">Reference proteome</keyword>
<accession>Q8ENQ5</accession>
<sequence length="139" mass="15676">MSKKIIYFLCTGNSCRSQMAEGWGKKILGEEWDVYSAGIEAHGLNPNAIKAMREVDIDITNQTSDQIDKDILNKADFVVTLCGDAKDKCPMTPPHVKRDHWGFEDPAKAQGTEEEKWTVFQQVRDKIGDRIKVFAKTGE</sequence>
<name>ARSC_OCEIH</name>
<proteinExistence type="inferred from homology"/>
<feature type="chain" id="PRO_0000162522" description="Arsenate reductase">
    <location>
        <begin position="1"/>
        <end position="139"/>
    </location>
</feature>
<feature type="active site" description="Nucleophile" evidence="1">
    <location>
        <position position="10"/>
    </location>
</feature>
<feature type="active site" description="Nucleophile" evidence="1">
    <location>
        <position position="82"/>
    </location>
</feature>
<feature type="active site" description="Nucleophile" evidence="1">
    <location>
        <position position="89"/>
    </location>
</feature>
<feature type="disulfide bond" description="Redox-active; alternate" evidence="1">
    <location>
        <begin position="10"/>
        <end position="82"/>
    </location>
</feature>
<feature type="disulfide bond" description="Redox-active; alternate" evidence="1">
    <location>
        <begin position="82"/>
        <end position="89"/>
    </location>
</feature>
<organism>
    <name type="scientific">Oceanobacillus iheyensis (strain DSM 14371 / CIP 107618 / JCM 11309 / KCTC 3954 / HTE831)</name>
    <dbReference type="NCBI Taxonomy" id="221109"/>
    <lineage>
        <taxon>Bacteria</taxon>
        <taxon>Bacillati</taxon>
        <taxon>Bacillota</taxon>
        <taxon>Bacilli</taxon>
        <taxon>Bacillales</taxon>
        <taxon>Bacillaceae</taxon>
        <taxon>Oceanobacillus</taxon>
    </lineage>
</organism>
<reference key="1">
    <citation type="journal article" date="2002" name="Nucleic Acids Res.">
        <title>Genome sequence of Oceanobacillus iheyensis isolated from the Iheya Ridge and its unexpected adaptive capabilities to extreme environments.</title>
        <authorList>
            <person name="Takami H."/>
            <person name="Takaki Y."/>
            <person name="Uchiyama I."/>
        </authorList>
    </citation>
    <scope>NUCLEOTIDE SEQUENCE [LARGE SCALE GENOMIC DNA]</scope>
    <source>
        <strain>DSM 14371 / CIP 107618 / JCM 11309 / KCTC 3954 / HTE831</strain>
    </source>
</reference>
<gene>
    <name evidence="1" type="primary">arsC</name>
    <name type="ordered locus">OB2423</name>
</gene>
<protein>
    <recommendedName>
        <fullName evidence="1">Arsenate reductase</fullName>
        <ecNumber evidence="1">1.20.4.4</ecNumber>
    </recommendedName>
</protein>
<comment type="function">
    <text evidence="1">Catalyzes the reduction of arsenate [As(V)] to arsenite [As(III)].</text>
</comment>
<comment type="catalytic activity">
    <reaction evidence="1">
        <text>arsenate + [thioredoxin]-dithiol + H(+) = arsenite + [thioredoxin]-disulfide + H2O</text>
        <dbReference type="Rhea" id="RHEA:43848"/>
        <dbReference type="Rhea" id="RHEA-COMP:10698"/>
        <dbReference type="Rhea" id="RHEA-COMP:10700"/>
        <dbReference type="ChEBI" id="CHEBI:15377"/>
        <dbReference type="ChEBI" id="CHEBI:15378"/>
        <dbReference type="ChEBI" id="CHEBI:29242"/>
        <dbReference type="ChEBI" id="CHEBI:29950"/>
        <dbReference type="ChEBI" id="CHEBI:48597"/>
        <dbReference type="ChEBI" id="CHEBI:50058"/>
        <dbReference type="EC" id="1.20.4.4"/>
    </reaction>
</comment>
<comment type="subcellular location">
    <subcellularLocation>
        <location evidence="1">Cytoplasm</location>
    </subcellularLocation>
</comment>
<comment type="similarity">
    <text evidence="1">Belongs to the low molecular weight phosphotyrosine protein phosphatase family. Thioredoxin-coupled ArsC subfamily.</text>
</comment>
<dbReference type="EC" id="1.20.4.4" evidence="1"/>
<dbReference type="EMBL" id="BA000028">
    <property type="protein sequence ID" value="BAC14379.1"/>
    <property type="molecule type" value="Genomic_DNA"/>
</dbReference>
<dbReference type="RefSeq" id="WP_011066814.1">
    <property type="nucleotide sequence ID" value="NC_004193.1"/>
</dbReference>
<dbReference type="SMR" id="Q8ENQ5"/>
<dbReference type="STRING" id="221109.gene:10734674"/>
<dbReference type="KEGG" id="oih:OB2423"/>
<dbReference type="eggNOG" id="COG0394">
    <property type="taxonomic scope" value="Bacteria"/>
</dbReference>
<dbReference type="HOGENOM" id="CLU_071415_3_2_9"/>
<dbReference type="OrthoDB" id="9784339at2"/>
<dbReference type="PhylomeDB" id="Q8ENQ5"/>
<dbReference type="Proteomes" id="UP000000822">
    <property type="component" value="Chromosome"/>
</dbReference>
<dbReference type="GO" id="GO:0005737">
    <property type="term" value="C:cytoplasm"/>
    <property type="evidence" value="ECO:0007669"/>
    <property type="project" value="UniProtKB-SubCell"/>
</dbReference>
<dbReference type="GO" id="GO:0030612">
    <property type="term" value="F:arsenate reductase (thioredoxin) activity"/>
    <property type="evidence" value="ECO:0007669"/>
    <property type="project" value="UniProtKB-UniRule"/>
</dbReference>
<dbReference type="GO" id="GO:0004725">
    <property type="term" value="F:protein tyrosine phosphatase activity"/>
    <property type="evidence" value="ECO:0007669"/>
    <property type="project" value="InterPro"/>
</dbReference>
<dbReference type="GO" id="GO:0046685">
    <property type="term" value="P:response to arsenic-containing substance"/>
    <property type="evidence" value="ECO:0007669"/>
    <property type="project" value="UniProtKB-KW"/>
</dbReference>
<dbReference type="CDD" id="cd16345">
    <property type="entry name" value="LMWP_ArsC"/>
    <property type="match status" value="1"/>
</dbReference>
<dbReference type="FunFam" id="3.40.50.2300:FF:000237">
    <property type="entry name" value="Arsenate reductase"/>
    <property type="match status" value="1"/>
</dbReference>
<dbReference type="Gene3D" id="3.40.50.2300">
    <property type="match status" value="1"/>
</dbReference>
<dbReference type="HAMAP" id="MF_01624">
    <property type="entry name" value="Arsenate_reduct"/>
    <property type="match status" value="1"/>
</dbReference>
<dbReference type="InterPro" id="IPR014064">
    <property type="entry name" value="Arsenate_reductase_ArsC"/>
</dbReference>
<dbReference type="InterPro" id="IPR023485">
    <property type="entry name" value="Ptyr_pPase"/>
</dbReference>
<dbReference type="InterPro" id="IPR036196">
    <property type="entry name" value="Ptyr_pPase_sf"/>
</dbReference>
<dbReference type="NCBIfam" id="TIGR02691">
    <property type="entry name" value="arsC_pI258_fam"/>
    <property type="match status" value="1"/>
</dbReference>
<dbReference type="NCBIfam" id="NF010053">
    <property type="entry name" value="PRK13530.1"/>
    <property type="match status" value="1"/>
</dbReference>
<dbReference type="PANTHER" id="PTHR43428">
    <property type="entry name" value="ARSENATE REDUCTASE"/>
    <property type="match status" value="1"/>
</dbReference>
<dbReference type="PANTHER" id="PTHR43428:SF1">
    <property type="entry name" value="ARSENATE REDUCTASE"/>
    <property type="match status" value="1"/>
</dbReference>
<dbReference type="Pfam" id="PF01451">
    <property type="entry name" value="LMWPc"/>
    <property type="match status" value="1"/>
</dbReference>
<dbReference type="SMART" id="SM00226">
    <property type="entry name" value="LMWPc"/>
    <property type="match status" value="1"/>
</dbReference>
<dbReference type="SUPFAM" id="SSF52788">
    <property type="entry name" value="Phosphotyrosine protein phosphatases I"/>
    <property type="match status" value="1"/>
</dbReference>